<keyword id="KW-0150">Chloroplast</keyword>
<keyword id="KW-0472">Membrane</keyword>
<keyword id="KW-0520">NAD</keyword>
<keyword id="KW-0521">NADP</keyword>
<keyword id="KW-0934">Plastid</keyword>
<keyword id="KW-0618">Plastoquinone</keyword>
<keyword id="KW-0874">Quinone</keyword>
<keyword id="KW-1185">Reference proteome</keyword>
<keyword id="KW-0793">Thylakoid</keyword>
<keyword id="KW-1278">Translocase</keyword>
<keyword id="KW-0812">Transmembrane</keyword>
<keyword id="KW-1133">Transmembrane helix</keyword>
<keyword id="KW-0813">Transport</keyword>
<sequence length="120" mass="13951">MFLLYEYDFFWAFLIISILVPILAFFISGVLAPISKGPEKLSTYESGIEPMGDAWLQFRIRYYMFALVFVVFDVETVFLYPWAMSFDVLGVSVFIEAFIFVLILIIGLVYAWRKGALEWS</sequence>
<comment type="function">
    <text evidence="1">NDH shuttles electrons from NAD(P)H:plastoquinone, via FMN and iron-sulfur (Fe-S) centers, to quinones in the photosynthetic chain and possibly in a chloroplast respiratory chain. The immediate electron acceptor for the enzyme in this species is believed to be plastoquinone. Couples the redox reaction to proton translocation, and thus conserves the redox energy in a proton gradient.</text>
</comment>
<comment type="catalytic activity">
    <reaction evidence="1">
        <text>a plastoquinone + NADH + (n+1) H(+)(in) = a plastoquinol + NAD(+) + n H(+)(out)</text>
        <dbReference type="Rhea" id="RHEA:42608"/>
        <dbReference type="Rhea" id="RHEA-COMP:9561"/>
        <dbReference type="Rhea" id="RHEA-COMP:9562"/>
        <dbReference type="ChEBI" id="CHEBI:15378"/>
        <dbReference type="ChEBI" id="CHEBI:17757"/>
        <dbReference type="ChEBI" id="CHEBI:57540"/>
        <dbReference type="ChEBI" id="CHEBI:57945"/>
        <dbReference type="ChEBI" id="CHEBI:62192"/>
    </reaction>
</comment>
<comment type="catalytic activity">
    <reaction evidence="1">
        <text>a plastoquinone + NADPH + (n+1) H(+)(in) = a plastoquinol + NADP(+) + n H(+)(out)</text>
        <dbReference type="Rhea" id="RHEA:42612"/>
        <dbReference type="Rhea" id="RHEA-COMP:9561"/>
        <dbReference type="Rhea" id="RHEA-COMP:9562"/>
        <dbReference type="ChEBI" id="CHEBI:15378"/>
        <dbReference type="ChEBI" id="CHEBI:17757"/>
        <dbReference type="ChEBI" id="CHEBI:57783"/>
        <dbReference type="ChEBI" id="CHEBI:58349"/>
        <dbReference type="ChEBI" id="CHEBI:62192"/>
    </reaction>
</comment>
<comment type="subunit">
    <text evidence="1">NDH is composed of at least 16 different subunits, 5 of which are encoded in the nucleus.</text>
</comment>
<comment type="subcellular location">
    <subcellularLocation>
        <location evidence="1">Plastid</location>
        <location evidence="1">Chloroplast thylakoid membrane</location>
        <topology evidence="1">Multi-pass membrane protein</topology>
    </subcellularLocation>
</comment>
<comment type="similarity">
    <text evidence="1">Belongs to the complex I subunit 3 family.</text>
</comment>
<proteinExistence type="inferred from homology"/>
<name>NU3C_SOLLC</name>
<reference key="1">
    <citation type="journal article" date="2006" name="Theor. Appl. Genet.">
        <title>Complete chloroplast genome sequences of Solanum bulbocastanum, Solanum lycopersicum and comparative analyses with other Solanaceae genomes.</title>
        <authorList>
            <person name="Daniell H."/>
            <person name="Lee S.-B."/>
            <person name="Grevich J."/>
            <person name="Saski C."/>
            <person name="Quesada-Vargas T."/>
            <person name="Guda C."/>
            <person name="Tomkins J."/>
            <person name="Jansen R.K."/>
        </authorList>
    </citation>
    <scope>NUCLEOTIDE SEQUENCE [LARGE SCALE GENOMIC DNA]</scope>
    <source>
        <strain>cv. LA3023</strain>
    </source>
</reference>
<reference key="2">
    <citation type="journal article" date="2006" name="J. Mol. Evol.">
        <title>Sequence of the tomato chloroplast DNA and evolutionary comparison of solanaceous plastid genomes.</title>
        <authorList>
            <person name="Kahlau S."/>
            <person name="Aspinall S."/>
            <person name="Gray J.C."/>
            <person name="Bock R."/>
        </authorList>
    </citation>
    <scope>NUCLEOTIDE SEQUENCE [LARGE SCALE GENOMIC DNA]</scope>
    <source>
        <strain>cv. IPA-6</strain>
    </source>
</reference>
<accession>Q2MI95</accession>
<gene>
    <name evidence="1" type="primary">ndhC</name>
</gene>
<evidence type="ECO:0000255" key="1">
    <source>
        <dbReference type="HAMAP-Rule" id="MF_01394"/>
    </source>
</evidence>
<dbReference type="EC" id="7.1.1.-" evidence="1"/>
<dbReference type="EMBL" id="DQ347959">
    <property type="protein sequence ID" value="ABC56305.1"/>
    <property type="molecule type" value="Genomic_DNA"/>
</dbReference>
<dbReference type="EMBL" id="AM087200">
    <property type="protein sequence ID" value="CAJ32398.1"/>
    <property type="molecule type" value="Genomic_DNA"/>
</dbReference>
<dbReference type="RefSeq" id="AP_004933.1">
    <property type="nucleotide sequence ID" value="AC_000188.1"/>
</dbReference>
<dbReference type="RefSeq" id="YP_008563093.1">
    <property type="nucleotide sequence ID" value="NC_007898.3"/>
</dbReference>
<dbReference type="SMR" id="Q2MI95"/>
<dbReference type="FunCoup" id="Q2MI95">
    <property type="interactions" value="50"/>
</dbReference>
<dbReference type="STRING" id="4081.Q2MI95"/>
<dbReference type="PaxDb" id="4081-Solyc01g007310.2.1"/>
<dbReference type="GeneID" id="3950424"/>
<dbReference type="KEGG" id="sly:3950424"/>
<dbReference type="eggNOG" id="KOG4662">
    <property type="taxonomic scope" value="Eukaryota"/>
</dbReference>
<dbReference type="HOGENOM" id="CLU_119549_1_1_1"/>
<dbReference type="InParanoid" id="Q2MI95"/>
<dbReference type="OrthoDB" id="154075at2759"/>
<dbReference type="PhylomeDB" id="Q2MI95"/>
<dbReference type="Proteomes" id="UP000004994">
    <property type="component" value="Chloroplast"/>
</dbReference>
<dbReference type="GO" id="GO:0009535">
    <property type="term" value="C:chloroplast thylakoid membrane"/>
    <property type="evidence" value="ECO:0007669"/>
    <property type="project" value="UniProtKB-SubCell"/>
</dbReference>
<dbReference type="GO" id="GO:0030964">
    <property type="term" value="C:NADH dehydrogenase complex"/>
    <property type="evidence" value="ECO:0000318"/>
    <property type="project" value="GO_Central"/>
</dbReference>
<dbReference type="GO" id="GO:0008137">
    <property type="term" value="F:NADH dehydrogenase (ubiquinone) activity"/>
    <property type="evidence" value="ECO:0000318"/>
    <property type="project" value="GO_Central"/>
</dbReference>
<dbReference type="GO" id="GO:0048038">
    <property type="term" value="F:quinone binding"/>
    <property type="evidence" value="ECO:0007669"/>
    <property type="project" value="UniProtKB-KW"/>
</dbReference>
<dbReference type="GO" id="GO:0019684">
    <property type="term" value="P:photosynthesis, light reaction"/>
    <property type="evidence" value="ECO:0007669"/>
    <property type="project" value="UniProtKB-UniRule"/>
</dbReference>
<dbReference type="FunFam" id="1.20.58.1610:FF:000001">
    <property type="entry name" value="NAD(P)H-quinone oxidoreductase subunit 3, chloroplastic"/>
    <property type="match status" value="1"/>
</dbReference>
<dbReference type="Gene3D" id="1.20.58.1610">
    <property type="entry name" value="NADH:ubiquinone/plastoquinone oxidoreductase, chain 3"/>
    <property type="match status" value="1"/>
</dbReference>
<dbReference type="HAMAP" id="MF_01394">
    <property type="entry name" value="NDH1_NuoA"/>
    <property type="match status" value="1"/>
</dbReference>
<dbReference type="InterPro" id="IPR023043">
    <property type="entry name" value="NAD(P)H_OxRDtase_bac/plastid"/>
</dbReference>
<dbReference type="InterPro" id="IPR000440">
    <property type="entry name" value="NADH_UbQ/plastoQ_OxRdtase_su3"/>
</dbReference>
<dbReference type="InterPro" id="IPR038430">
    <property type="entry name" value="NDAH_ubi_oxred_su3_sf"/>
</dbReference>
<dbReference type="PANTHER" id="PTHR11058">
    <property type="entry name" value="NADH-UBIQUINONE OXIDOREDUCTASE CHAIN 3"/>
    <property type="match status" value="1"/>
</dbReference>
<dbReference type="PANTHER" id="PTHR11058:SF9">
    <property type="entry name" value="NADH-UBIQUINONE OXIDOREDUCTASE CHAIN 3"/>
    <property type="match status" value="1"/>
</dbReference>
<dbReference type="Pfam" id="PF00507">
    <property type="entry name" value="Oxidored_q4"/>
    <property type="match status" value="1"/>
</dbReference>
<geneLocation type="chloroplast"/>
<protein>
    <recommendedName>
        <fullName evidence="1">NAD(P)H-quinone oxidoreductase subunit 3, chloroplastic</fullName>
        <ecNumber evidence="1">7.1.1.-</ecNumber>
    </recommendedName>
    <alternativeName>
        <fullName evidence="1">NAD(P)H dehydrogenase subunit 3</fullName>
    </alternativeName>
    <alternativeName>
        <fullName evidence="1">NADH-plastoquinone oxidoreductase subunit 3</fullName>
    </alternativeName>
</protein>
<organism>
    <name type="scientific">Solanum lycopersicum</name>
    <name type="common">Tomato</name>
    <name type="synonym">Lycopersicon esculentum</name>
    <dbReference type="NCBI Taxonomy" id="4081"/>
    <lineage>
        <taxon>Eukaryota</taxon>
        <taxon>Viridiplantae</taxon>
        <taxon>Streptophyta</taxon>
        <taxon>Embryophyta</taxon>
        <taxon>Tracheophyta</taxon>
        <taxon>Spermatophyta</taxon>
        <taxon>Magnoliopsida</taxon>
        <taxon>eudicotyledons</taxon>
        <taxon>Gunneridae</taxon>
        <taxon>Pentapetalae</taxon>
        <taxon>asterids</taxon>
        <taxon>lamiids</taxon>
        <taxon>Solanales</taxon>
        <taxon>Solanaceae</taxon>
        <taxon>Solanoideae</taxon>
        <taxon>Solaneae</taxon>
        <taxon>Solanum</taxon>
        <taxon>Solanum subgen. Lycopersicon</taxon>
    </lineage>
</organism>
<feature type="chain" id="PRO_0000277413" description="NAD(P)H-quinone oxidoreductase subunit 3, chloroplastic">
    <location>
        <begin position="1"/>
        <end position="120"/>
    </location>
</feature>
<feature type="transmembrane region" description="Helical" evidence="1">
    <location>
        <begin position="9"/>
        <end position="29"/>
    </location>
</feature>
<feature type="transmembrane region" description="Helical" evidence="1">
    <location>
        <begin position="64"/>
        <end position="84"/>
    </location>
</feature>
<feature type="transmembrane region" description="Helical" evidence="1">
    <location>
        <begin position="88"/>
        <end position="108"/>
    </location>
</feature>